<reference key="1">
    <citation type="submission" date="2006-03" db="EMBL/GenBank/DDBJ databases">
        <title>Complete genome sequence of Gemmatimonas aurantiaca T-27 that represents a novel phylum Gemmatimonadetes.</title>
        <authorList>
            <person name="Takasaki K."/>
            <person name="Ichikawa N."/>
            <person name="Miura H."/>
            <person name="Matsushita S."/>
            <person name="Watanabe Y."/>
            <person name="Oguchi A."/>
            <person name="Ankai A."/>
            <person name="Yashiro I."/>
            <person name="Takahashi M."/>
            <person name="Terui Y."/>
            <person name="Fukui S."/>
            <person name="Yokoyama H."/>
            <person name="Tanikawa S."/>
            <person name="Hanada S."/>
            <person name="Kamagata Y."/>
            <person name="Fujita N."/>
        </authorList>
    </citation>
    <scope>NUCLEOTIDE SEQUENCE [LARGE SCALE GENOMIC DNA]</scope>
    <source>
        <strain>DSM 14586 / JCM 11422 / NBRC 100505 / T-27</strain>
    </source>
</reference>
<keyword id="KW-0067">ATP-binding</keyword>
<keyword id="KW-0963">Cytoplasm</keyword>
<keyword id="KW-0275">Fatty acid biosynthesis</keyword>
<keyword id="KW-0276">Fatty acid metabolism</keyword>
<keyword id="KW-0444">Lipid biosynthesis</keyword>
<keyword id="KW-0443">Lipid metabolism</keyword>
<keyword id="KW-0547">Nucleotide-binding</keyword>
<keyword id="KW-1185">Reference proteome</keyword>
<keyword id="KW-0808">Transferase</keyword>
<protein>
    <recommendedName>
        <fullName evidence="1">Acetyl-coenzyme A carboxylase carboxyl transferase subunit alpha</fullName>
        <shortName evidence="1">ACCase subunit alpha</shortName>
        <shortName evidence="1">Acetyl-CoA carboxylase carboxyltransferase subunit alpha</shortName>
        <ecNumber evidence="1">2.1.3.15</ecNumber>
    </recommendedName>
</protein>
<sequence>MAAAPVLEFERPIADLEKQIEELKRLAADRSLDVAEELAPLQKKLGDLRIQIYQNLSPLQRVQVARMSRRPFTSDYIKHAFSDFIELHGDRLFREDAAIMAGWARLEGETVMLIGHERGRDTKENLKRNFGMPHPEGYRKALRLMKLAEKFQVPVLTFIDTPGAWPGLGAEERGQSEAIARNLLEMSQLQVPIIATIIGEGGSGGALALGVADRVLMFENSVYSTISVEGCAAILWKDGKSQEMREKAATALRVTAADLVELRVIDEVIQEPVGGAHADHAATARALRETLTRNLEELRRLKPDKLVRRRREKFLRMGQFTE</sequence>
<evidence type="ECO:0000255" key="1">
    <source>
        <dbReference type="HAMAP-Rule" id="MF_00823"/>
    </source>
</evidence>
<evidence type="ECO:0000255" key="2">
    <source>
        <dbReference type="PROSITE-ProRule" id="PRU01137"/>
    </source>
</evidence>
<proteinExistence type="inferred from homology"/>
<organism>
    <name type="scientific">Gemmatimonas aurantiaca (strain DSM 14586 / JCM 11422 / NBRC 100505 / T-27)</name>
    <dbReference type="NCBI Taxonomy" id="379066"/>
    <lineage>
        <taxon>Bacteria</taxon>
        <taxon>Pseudomonadati</taxon>
        <taxon>Gemmatimonadota</taxon>
        <taxon>Gemmatimonadia</taxon>
        <taxon>Gemmatimonadales</taxon>
        <taxon>Gemmatimonadaceae</taxon>
        <taxon>Gemmatimonas</taxon>
    </lineage>
</organism>
<gene>
    <name evidence="1" type="primary">accA</name>
    <name type="ordered locus">GAU_0736</name>
</gene>
<name>ACCA_GEMAT</name>
<accession>C1A6B8</accession>
<dbReference type="EC" id="2.1.3.15" evidence="1"/>
<dbReference type="EMBL" id="AP009153">
    <property type="protein sequence ID" value="BAH37778.1"/>
    <property type="molecule type" value="Genomic_DNA"/>
</dbReference>
<dbReference type="RefSeq" id="WP_012682225.1">
    <property type="nucleotide sequence ID" value="NC_012489.1"/>
</dbReference>
<dbReference type="SMR" id="C1A6B8"/>
<dbReference type="STRING" id="379066.GAU_0736"/>
<dbReference type="KEGG" id="gau:GAU_0736"/>
<dbReference type="eggNOG" id="COG0825">
    <property type="taxonomic scope" value="Bacteria"/>
</dbReference>
<dbReference type="HOGENOM" id="CLU_015486_0_2_0"/>
<dbReference type="OrthoDB" id="9808023at2"/>
<dbReference type="UniPathway" id="UPA00655">
    <property type="reaction ID" value="UER00711"/>
</dbReference>
<dbReference type="Proteomes" id="UP000002209">
    <property type="component" value="Chromosome"/>
</dbReference>
<dbReference type="GO" id="GO:0009317">
    <property type="term" value="C:acetyl-CoA carboxylase complex"/>
    <property type="evidence" value="ECO:0007669"/>
    <property type="project" value="InterPro"/>
</dbReference>
<dbReference type="GO" id="GO:0003989">
    <property type="term" value="F:acetyl-CoA carboxylase activity"/>
    <property type="evidence" value="ECO:0007669"/>
    <property type="project" value="InterPro"/>
</dbReference>
<dbReference type="GO" id="GO:0005524">
    <property type="term" value="F:ATP binding"/>
    <property type="evidence" value="ECO:0007669"/>
    <property type="project" value="UniProtKB-KW"/>
</dbReference>
<dbReference type="GO" id="GO:0016743">
    <property type="term" value="F:carboxyl- or carbamoyltransferase activity"/>
    <property type="evidence" value="ECO:0007669"/>
    <property type="project" value="UniProtKB-UniRule"/>
</dbReference>
<dbReference type="GO" id="GO:0006633">
    <property type="term" value="P:fatty acid biosynthetic process"/>
    <property type="evidence" value="ECO:0007669"/>
    <property type="project" value="UniProtKB-KW"/>
</dbReference>
<dbReference type="GO" id="GO:2001295">
    <property type="term" value="P:malonyl-CoA biosynthetic process"/>
    <property type="evidence" value="ECO:0007669"/>
    <property type="project" value="UniProtKB-UniRule"/>
</dbReference>
<dbReference type="Gene3D" id="3.90.226.10">
    <property type="entry name" value="2-enoyl-CoA Hydratase, Chain A, domain 1"/>
    <property type="match status" value="1"/>
</dbReference>
<dbReference type="HAMAP" id="MF_00823">
    <property type="entry name" value="AcetylCoA_CT_alpha"/>
    <property type="match status" value="1"/>
</dbReference>
<dbReference type="InterPro" id="IPR001095">
    <property type="entry name" value="Acetyl_CoA_COase_a_su"/>
</dbReference>
<dbReference type="InterPro" id="IPR029045">
    <property type="entry name" value="ClpP/crotonase-like_dom_sf"/>
</dbReference>
<dbReference type="InterPro" id="IPR011763">
    <property type="entry name" value="COA_CT_C"/>
</dbReference>
<dbReference type="NCBIfam" id="TIGR00513">
    <property type="entry name" value="accA"/>
    <property type="match status" value="1"/>
</dbReference>
<dbReference type="NCBIfam" id="NF041504">
    <property type="entry name" value="AccA_sub"/>
    <property type="match status" value="1"/>
</dbReference>
<dbReference type="NCBIfam" id="NF004344">
    <property type="entry name" value="PRK05724.1"/>
    <property type="match status" value="1"/>
</dbReference>
<dbReference type="PANTHER" id="PTHR42853">
    <property type="entry name" value="ACETYL-COENZYME A CARBOXYLASE CARBOXYL TRANSFERASE SUBUNIT ALPHA"/>
    <property type="match status" value="1"/>
</dbReference>
<dbReference type="PANTHER" id="PTHR42853:SF3">
    <property type="entry name" value="ACETYL-COENZYME A CARBOXYLASE CARBOXYL TRANSFERASE SUBUNIT ALPHA, CHLOROPLASTIC"/>
    <property type="match status" value="1"/>
</dbReference>
<dbReference type="Pfam" id="PF03255">
    <property type="entry name" value="ACCA"/>
    <property type="match status" value="1"/>
</dbReference>
<dbReference type="PRINTS" id="PR01069">
    <property type="entry name" value="ACCCTRFRASEA"/>
</dbReference>
<dbReference type="SUPFAM" id="SSF52096">
    <property type="entry name" value="ClpP/crotonase"/>
    <property type="match status" value="1"/>
</dbReference>
<dbReference type="PROSITE" id="PS50989">
    <property type="entry name" value="COA_CT_CTER"/>
    <property type="match status" value="1"/>
</dbReference>
<feature type="chain" id="PRO_1000213126" description="Acetyl-coenzyme A carboxylase carboxyl transferase subunit alpha">
    <location>
        <begin position="1"/>
        <end position="322"/>
    </location>
</feature>
<feature type="domain" description="CoA carboxyltransferase C-terminal" evidence="2">
    <location>
        <begin position="40"/>
        <end position="297"/>
    </location>
</feature>
<comment type="function">
    <text evidence="1">Component of the acetyl coenzyme A carboxylase (ACC) complex. First, biotin carboxylase catalyzes the carboxylation of biotin on its carrier protein (BCCP) and then the CO(2) group is transferred by the carboxyltransferase to acetyl-CoA to form malonyl-CoA.</text>
</comment>
<comment type="catalytic activity">
    <reaction evidence="1">
        <text>N(6)-carboxybiotinyl-L-lysyl-[protein] + acetyl-CoA = N(6)-biotinyl-L-lysyl-[protein] + malonyl-CoA</text>
        <dbReference type="Rhea" id="RHEA:54728"/>
        <dbReference type="Rhea" id="RHEA-COMP:10505"/>
        <dbReference type="Rhea" id="RHEA-COMP:10506"/>
        <dbReference type="ChEBI" id="CHEBI:57288"/>
        <dbReference type="ChEBI" id="CHEBI:57384"/>
        <dbReference type="ChEBI" id="CHEBI:83144"/>
        <dbReference type="ChEBI" id="CHEBI:83145"/>
        <dbReference type="EC" id="2.1.3.15"/>
    </reaction>
</comment>
<comment type="pathway">
    <text evidence="1">Lipid metabolism; malonyl-CoA biosynthesis; malonyl-CoA from acetyl-CoA: step 1/1.</text>
</comment>
<comment type="subunit">
    <text evidence="1">Acetyl-CoA carboxylase is a heterohexamer composed of biotin carboxyl carrier protein (AccB), biotin carboxylase (AccC) and two subunits each of ACCase subunit alpha (AccA) and ACCase subunit beta (AccD).</text>
</comment>
<comment type="subcellular location">
    <subcellularLocation>
        <location evidence="1">Cytoplasm</location>
    </subcellularLocation>
</comment>
<comment type="similarity">
    <text evidence="1">Belongs to the AccA family.</text>
</comment>